<dbReference type="EC" id="1.4.3.13" evidence="3"/>
<dbReference type="EMBL" id="AF338440">
    <property type="protein sequence ID" value="AAK71933.1"/>
    <property type="molecule type" value="mRNA"/>
</dbReference>
<dbReference type="EMBL" id="AC124552">
    <property type="status" value="NOT_ANNOTATED_CDS"/>
    <property type="molecule type" value="Genomic_DNA"/>
</dbReference>
<dbReference type="CCDS" id="CCDS29830.1"/>
<dbReference type="RefSeq" id="NP_444313.3">
    <property type="nucleotide sequence ID" value="NM_053083.3"/>
</dbReference>
<dbReference type="SMR" id="Q924C6"/>
<dbReference type="BioGRID" id="212283">
    <property type="interactions" value="6"/>
</dbReference>
<dbReference type="FunCoup" id="Q924C6">
    <property type="interactions" value="92"/>
</dbReference>
<dbReference type="IntAct" id="Q924C6">
    <property type="interactions" value="1"/>
</dbReference>
<dbReference type="MINT" id="Q924C6"/>
<dbReference type="STRING" id="10090.ENSMUSP00000125803"/>
<dbReference type="GlyCosmos" id="Q924C6">
    <property type="glycosylation" value="2 sites, No reported glycans"/>
</dbReference>
<dbReference type="GlyGen" id="Q924C6">
    <property type="glycosylation" value="3 sites"/>
</dbReference>
<dbReference type="iPTMnet" id="Q924C6"/>
<dbReference type="PhosphoSitePlus" id="Q924C6"/>
<dbReference type="jPOST" id="Q924C6"/>
<dbReference type="PaxDb" id="10090-ENSMUSP00000125803"/>
<dbReference type="ProteomicsDB" id="292353"/>
<dbReference type="Pumba" id="Q924C6"/>
<dbReference type="Antibodypedia" id="31028">
    <property type="antibodies" value="217 antibodies from 23 providers"/>
</dbReference>
<dbReference type="DNASU" id="67573"/>
<dbReference type="Ensembl" id="ENSMUST00000026190.14">
    <property type="protein sequence ID" value="ENSMUSP00000026190.8"/>
    <property type="gene ID" value="ENSMUSG00000025185.15"/>
</dbReference>
<dbReference type="Ensembl" id="ENSMUST00000171432.2">
    <property type="protein sequence ID" value="ENSMUSP00000126686.2"/>
    <property type="gene ID" value="ENSMUSG00000025185.15"/>
</dbReference>
<dbReference type="GeneID" id="67573"/>
<dbReference type="KEGG" id="mmu:67573"/>
<dbReference type="UCSC" id="uc008hns.2">
    <property type="organism name" value="mouse"/>
</dbReference>
<dbReference type="AGR" id="MGI:1914823"/>
<dbReference type="CTD" id="84171"/>
<dbReference type="MGI" id="MGI:1914823">
    <property type="gene designation" value="Loxl4"/>
</dbReference>
<dbReference type="VEuPathDB" id="HostDB:ENSMUSG00000025185"/>
<dbReference type="eggNOG" id="ENOG502QSX8">
    <property type="taxonomic scope" value="Eukaryota"/>
</dbReference>
<dbReference type="GeneTree" id="ENSGT00940000157042"/>
<dbReference type="HOGENOM" id="CLU_002555_3_0_1"/>
<dbReference type="InParanoid" id="Q924C6"/>
<dbReference type="OrthoDB" id="547291at2759"/>
<dbReference type="Reactome" id="R-MMU-1566948">
    <property type="pathway name" value="Elastic fibre formation"/>
</dbReference>
<dbReference type="Reactome" id="R-MMU-2243919">
    <property type="pathway name" value="Crosslinking of collagen fibrils"/>
</dbReference>
<dbReference type="BioGRID-ORCS" id="67573">
    <property type="hits" value="0 hits in 75 CRISPR screens"/>
</dbReference>
<dbReference type="PRO" id="PR:Q924C6"/>
<dbReference type="Proteomes" id="UP000000589">
    <property type="component" value="Chromosome 19"/>
</dbReference>
<dbReference type="RNAct" id="Q924C6">
    <property type="molecule type" value="protein"/>
</dbReference>
<dbReference type="Bgee" id="ENSMUSG00000025185">
    <property type="expression patterns" value="Expressed in intramembranous bone and 95 other cell types or tissues"/>
</dbReference>
<dbReference type="ExpressionAtlas" id="Q924C6">
    <property type="expression patterns" value="baseline and differential"/>
</dbReference>
<dbReference type="GO" id="GO:0005576">
    <property type="term" value="C:extracellular region"/>
    <property type="evidence" value="ECO:0000314"/>
    <property type="project" value="MGI"/>
</dbReference>
<dbReference type="GO" id="GO:0016020">
    <property type="term" value="C:membrane"/>
    <property type="evidence" value="ECO:0007669"/>
    <property type="project" value="InterPro"/>
</dbReference>
<dbReference type="GO" id="GO:0043235">
    <property type="term" value="C:receptor complex"/>
    <property type="evidence" value="ECO:0000266"/>
    <property type="project" value="MGI"/>
</dbReference>
<dbReference type="GO" id="GO:0005507">
    <property type="term" value="F:copper ion binding"/>
    <property type="evidence" value="ECO:0007669"/>
    <property type="project" value="InterPro"/>
</dbReference>
<dbReference type="GO" id="GO:0004720">
    <property type="term" value="F:protein-lysine 6-oxidase activity"/>
    <property type="evidence" value="ECO:0000314"/>
    <property type="project" value="MGI"/>
</dbReference>
<dbReference type="FunFam" id="3.10.250.10:FF:000001">
    <property type="entry name" value="Lysyl oxidase 4 isoform X1"/>
    <property type="match status" value="2"/>
</dbReference>
<dbReference type="FunFam" id="3.10.250.10:FF:000008">
    <property type="entry name" value="Lysyl oxidase homolog 2"/>
    <property type="match status" value="1"/>
</dbReference>
<dbReference type="FunFam" id="3.10.250.10:FF:000023">
    <property type="entry name" value="lysyl oxidase homolog 4"/>
    <property type="match status" value="1"/>
</dbReference>
<dbReference type="Gene3D" id="3.10.250.10">
    <property type="entry name" value="SRCR-like domain"/>
    <property type="match status" value="4"/>
</dbReference>
<dbReference type="InterPro" id="IPR050912">
    <property type="entry name" value="LOX-like_protein"/>
</dbReference>
<dbReference type="InterPro" id="IPR001695">
    <property type="entry name" value="Lysyl_oxidase"/>
</dbReference>
<dbReference type="InterPro" id="IPR019828">
    <property type="entry name" value="Lysyl_oxidase_CS"/>
</dbReference>
<dbReference type="InterPro" id="IPR001190">
    <property type="entry name" value="SRCR"/>
</dbReference>
<dbReference type="InterPro" id="IPR036772">
    <property type="entry name" value="SRCR-like_dom_sf"/>
</dbReference>
<dbReference type="PANTHER" id="PTHR45817:SF5">
    <property type="entry name" value="LYSYL OXIDASE HOMOLOG 4"/>
    <property type="match status" value="1"/>
</dbReference>
<dbReference type="PANTHER" id="PTHR45817">
    <property type="entry name" value="LYSYL OXIDASE-LIKE-RELATED"/>
    <property type="match status" value="1"/>
</dbReference>
<dbReference type="Pfam" id="PF01186">
    <property type="entry name" value="Lysyl_oxidase"/>
    <property type="match status" value="1"/>
</dbReference>
<dbReference type="Pfam" id="PF00530">
    <property type="entry name" value="SRCR"/>
    <property type="match status" value="4"/>
</dbReference>
<dbReference type="PRINTS" id="PR00074">
    <property type="entry name" value="LYSYLOXIDASE"/>
</dbReference>
<dbReference type="PRINTS" id="PR00258">
    <property type="entry name" value="SPERACTRCPTR"/>
</dbReference>
<dbReference type="SMART" id="SM00202">
    <property type="entry name" value="SR"/>
    <property type="match status" value="4"/>
</dbReference>
<dbReference type="SUPFAM" id="SSF56487">
    <property type="entry name" value="SRCR-like"/>
    <property type="match status" value="4"/>
</dbReference>
<dbReference type="PROSITE" id="PS00926">
    <property type="entry name" value="LYSYL_OXIDASE"/>
    <property type="match status" value="1"/>
</dbReference>
<dbReference type="PROSITE" id="PS00420">
    <property type="entry name" value="SRCR_1"/>
    <property type="match status" value="1"/>
</dbReference>
<dbReference type="PROSITE" id="PS50287">
    <property type="entry name" value="SRCR_2"/>
    <property type="match status" value="4"/>
</dbReference>
<evidence type="ECO:0000250" key="1">
    <source>
        <dbReference type="UniProtKB" id="P16636"/>
    </source>
</evidence>
<evidence type="ECO:0000250" key="2">
    <source>
        <dbReference type="UniProtKB" id="P33072"/>
    </source>
</evidence>
<evidence type="ECO:0000250" key="3">
    <source>
        <dbReference type="UniProtKB" id="Q96JB6"/>
    </source>
</evidence>
<evidence type="ECO:0000255" key="4"/>
<evidence type="ECO:0000255" key="5">
    <source>
        <dbReference type="PROSITE-ProRule" id="PRU00196"/>
    </source>
</evidence>
<evidence type="ECO:0000305" key="6"/>
<name>LOXL4_MOUSE</name>
<comment type="function">
    <text evidence="3">Catalyzes the oxidative deamination of lysine and hydroxylysine residues in collagen and elastin, resulting in the formation of covalent cross-linkages, and the stabilization of collagen and elastin fibers.</text>
</comment>
<comment type="catalytic activity">
    <reaction evidence="3">
        <text>L-lysyl-[protein] + O2 + H2O = (S)-2-amino-6-oxohexanoyl-[protein] + H2O2 + NH4(+)</text>
        <dbReference type="Rhea" id="RHEA:24544"/>
        <dbReference type="Rhea" id="RHEA-COMP:9752"/>
        <dbReference type="Rhea" id="RHEA-COMP:12448"/>
        <dbReference type="ChEBI" id="CHEBI:15377"/>
        <dbReference type="ChEBI" id="CHEBI:15379"/>
        <dbReference type="ChEBI" id="CHEBI:16240"/>
        <dbReference type="ChEBI" id="CHEBI:28938"/>
        <dbReference type="ChEBI" id="CHEBI:29969"/>
        <dbReference type="ChEBI" id="CHEBI:131803"/>
        <dbReference type="EC" id="1.4.3.13"/>
    </reaction>
</comment>
<comment type="cofactor">
    <cofactor evidence="1">
        <name>Cu cation</name>
        <dbReference type="ChEBI" id="CHEBI:23378"/>
    </cofactor>
</comment>
<comment type="cofactor">
    <cofactor evidence="2">
        <name>lysine tyrosylquinone residue</name>
        <dbReference type="ChEBI" id="CHEBI:20489"/>
    </cofactor>
    <text evidence="2">Contains 1 lysine tyrosylquinone.</text>
</comment>
<comment type="subcellular location">
    <subcellularLocation>
        <location evidence="6">Secreted</location>
        <location evidence="6">Extracellular space</location>
    </subcellularLocation>
</comment>
<comment type="PTM">
    <text evidence="2">The lysine tyrosylquinone cross-link (LTQ) is generated by condensation of the epsilon-amino group of a lysine with a topaquinone produced by oxidation of tyrosine.</text>
</comment>
<comment type="PTM">
    <text evidence="3">May be proteolytically cleaved by BMP1.</text>
</comment>
<comment type="similarity">
    <text evidence="6">Belongs to the lysyl oxidase family.</text>
</comment>
<accession>Q924C6</accession>
<accession>E9PXI3</accession>
<sequence length="757" mass="84779">MMWPQPPTFSLFLLLLLSQAPSSRPQSSGTKKLRLVGPTDRPEEGRLEVLHQGQWGTVCDDDFALQEATVACRQLGFESALTWAHSAKYGQGEGPIWLDNVRCLGTEKTLDQCGSNGWGVSDCRHSEDVGVVCHPRRQHGYHSEKVSNALGPQGRRLEEVRLKPILASAKRHSPVTEGAVEVRYDGHWRQVCDQGWTMNNSRVVCGMLGFPSQTSVNSHYYRKVWNLKMKDPKSRLNSLTKKNSFWIHRVDCLGTEPHLAKCQVQVAPGRGKLRPACPGGMHAVVSCVAGPHFRRQKPKPTRKESHAEELKVRLRSGAQVGEGRVEVLMNRQWGTVCDHRWNLISASVVCRQLGFGSAREALFGAQLGQGLGPIHLSEVRCRGYERTLGDCLALEGSQNGCQHANDAAVRCNIPDMGFQNKVRLAGGRNSEEGVVEVQVEVNGVPRWGTVCSDHWGLTEAMVTCRQLGLGFANFALKDTWYWQGTPEAKEVVMSGVRCSGTEMALQQCQRHGPVHCSHGPGRFSAGVACMNSAPDLVMNAQLVQETAYLEDRPLSMLYCAHEENCLSKSADHMDWPYGYRRLLRFSSQIYNLGRADFRPKAGRHSWIWHQCHRHYHSIEVFTHYDLLTLNGSKVAEGHKASFCLEDTNCPSGVQRRYACANFGEQGVAVGCWDTYRHDIDCQWVDITDVGPGDYIFQVVVNPTNDVAESDFSNNMIRCRCKYDGQRVWLHNCHTGDSYRANAELSLEQEQRLRNNLI</sequence>
<organism>
    <name type="scientific">Mus musculus</name>
    <name type="common">Mouse</name>
    <dbReference type="NCBI Taxonomy" id="10090"/>
    <lineage>
        <taxon>Eukaryota</taxon>
        <taxon>Metazoa</taxon>
        <taxon>Chordata</taxon>
        <taxon>Craniata</taxon>
        <taxon>Vertebrata</taxon>
        <taxon>Euteleostomi</taxon>
        <taxon>Mammalia</taxon>
        <taxon>Eutheria</taxon>
        <taxon>Euarchontoglires</taxon>
        <taxon>Glires</taxon>
        <taxon>Rodentia</taxon>
        <taxon>Myomorpha</taxon>
        <taxon>Muroidea</taxon>
        <taxon>Muridae</taxon>
        <taxon>Murinae</taxon>
        <taxon>Mus</taxon>
        <taxon>Mus</taxon>
    </lineage>
</organism>
<gene>
    <name type="primary">Loxl4</name>
    <name type="synonym">Loxc</name>
</gene>
<keyword id="KW-0186">Copper</keyword>
<keyword id="KW-1015">Disulfide bond</keyword>
<keyword id="KW-0325">Glycoprotein</keyword>
<keyword id="KW-0886">LTQ</keyword>
<keyword id="KW-0479">Metal-binding</keyword>
<keyword id="KW-0560">Oxidoreductase</keyword>
<keyword id="KW-1185">Reference proteome</keyword>
<keyword id="KW-0677">Repeat</keyword>
<keyword id="KW-0964">Secreted</keyword>
<keyword id="KW-0732">Signal</keyword>
<keyword id="KW-0801">TPQ</keyword>
<proteinExistence type="evidence at transcript level"/>
<reference key="1">
    <citation type="journal article" date="2001" name="J. Biol. Chem.">
        <title>Molecular cloning and biological activity of a novel lysyl oxidase-related gene expressed in cartilage.</title>
        <authorList>
            <person name="Ito H."/>
            <person name="Akiyama H."/>
            <person name="Iguchi H."/>
            <person name="Iyama K."/>
            <person name="Miyamoto M."/>
            <person name="Ohsawa K."/>
            <person name="Nakamura T."/>
        </authorList>
    </citation>
    <scope>NUCLEOTIDE SEQUENCE [MRNA]</scope>
</reference>
<reference key="2">
    <citation type="journal article" date="2009" name="PLoS Biol.">
        <title>Lineage-specific biology revealed by a finished genome assembly of the mouse.</title>
        <authorList>
            <person name="Church D.M."/>
            <person name="Goodstadt L."/>
            <person name="Hillier L.W."/>
            <person name="Zody M.C."/>
            <person name="Goldstein S."/>
            <person name="She X."/>
            <person name="Bult C.J."/>
            <person name="Agarwala R."/>
            <person name="Cherry J.L."/>
            <person name="DiCuccio M."/>
            <person name="Hlavina W."/>
            <person name="Kapustin Y."/>
            <person name="Meric P."/>
            <person name="Maglott D."/>
            <person name="Birtle Z."/>
            <person name="Marques A.C."/>
            <person name="Graves T."/>
            <person name="Zhou S."/>
            <person name="Teague B."/>
            <person name="Potamousis K."/>
            <person name="Churas C."/>
            <person name="Place M."/>
            <person name="Herschleb J."/>
            <person name="Runnheim R."/>
            <person name="Forrest D."/>
            <person name="Amos-Landgraf J."/>
            <person name="Schwartz D.C."/>
            <person name="Cheng Z."/>
            <person name="Lindblad-Toh K."/>
            <person name="Eichler E.E."/>
            <person name="Ponting C.P."/>
        </authorList>
    </citation>
    <scope>NUCLEOTIDE SEQUENCE [LARGE SCALE GENOMIC DNA]</scope>
    <source>
        <strain>C57BL/6J</strain>
    </source>
</reference>
<feature type="signal peptide" evidence="4">
    <location>
        <begin position="1"/>
        <end position="25"/>
    </location>
</feature>
<feature type="chain" id="PRO_0000018536" description="Lysyl oxidase homolog 4">
    <location>
        <begin position="26"/>
        <end position="757"/>
    </location>
</feature>
<feature type="domain" description="SRCR 1" evidence="5">
    <location>
        <begin position="33"/>
        <end position="134"/>
    </location>
</feature>
<feature type="domain" description="SRCR 2" evidence="5">
    <location>
        <begin position="160"/>
        <end position="288"/>
    </location>
</feature>
<feature type="domain" description="SRCR 3" evidence="5">
    <location>
        <begin position="312"/>
        <end position="412"/>
    </location>
</feature>
<feature type="domain" description="SRCR 4" evidence="5">
    <location>
        <begin position="422"/>
        <end position="530"/>
    </location>
</feature>
<feature type="region of interest" description="Lysyl-oxidase like">
    <location>
        <begin position="534"/>
        <end position="737"/>
    </location>
</feature>
<feature type="binding site" evidence="4">
    <location>
        <position position="612"/>
    </location>
    <ligand>
        <name>Cu cation</name>
        <dbReference type="ChEBI" id="CHEBI:23378"/>
    </ligand>
</feature>
<feature type="binding site" evidence="4">
    <location>
        <position position="614"/>
    </location>
    <ligand>
        <name>Cu cation</name>
        <dbReference type="ChEBI" id="CHEBI:23378"/>
    </ligand>
</feature>
<feature type="binding site" evidence="4">
    <location>
        <position position="616"/>
    </location>
    <ligand>
        <name>Cu cation</name>
        <dbReference type="ChEBI" id="CHEBI:23378"/>
    </ligand>
</feature>
<feature type="site" description="Cleavage; by BMP1" evidence="3">
    <location>
        <begin position="570"/>
        <end position="571"/>
    </location>
</feature>
<feature type="modified residue" description="2',4',5'-topaquinone" evidence="2">
    <location>
        <position position="675"/>
    </location>
</feature>
<feature type="glycosylation site" description="N-linked (GlcNAc...) asparagine" evidence="4">
    <location>
        <position position="199"/>
    </location>
</feature>
<feature type="glycosylation site" description="N-linked (GlcNAc...) asparagine" evidence="4">
    <location>
        <position position="630"/>
    </location>
</feature>
<feature type="disulfide bond" evidence="5">
    <location>
        <begin position="59"/>
        <end position="123"/>
    </location>
</feature>
<feature type="disulfide bond" evidence="5">
    <location>
        <begin position="72"/>
        <end position="133"/>
    </location>
</feature>
<feature type="disulfide bond" evidence="5">
    <location>
        <begin position="103"/>
        <end position="113"/>
    </location>
</feature>
<feature type="disulfide bond" evidence="5">
    <location>
        <begin position="192"/>
        <end position="277"/>
    </location>
</feature>
<feature type="disulfide bond" evidence="5">
    <location>
        <begin position="205"/>
        <end position="287"/>
    </location>
</feature>
<feature type="disulfide bond" evidence="5">
    <location>
        <begin position="252"/>
        <end position="262"/>
    </location>
</feature>
<feature type="disulfide bond" evidence="5">
    <location>
        <begin position="337"/>
        <end position="401"/>
    </location>
</feature>
<feature type="disulfide bond" evidence="5">
    <location>
        <begin position="350"/>
        <end position="411"/>
    </location>
</feature>
<feature type="disulfide bond" evidence="5">
    <location>
        <begin position="381"/>
        <end position="391"/>
    </location>
</feature>
<feature type="disulfide bond" evidence="5">
    <location>
        <begin position="451"/>
        <end position="516"/>
    </location>
</feature>
<feature type="disulfide bond" evidence="5">
    <location>
        <begin position="464"/>
        <end position="529"/>
    </location>
</feature>
<feature type="disulfide bond" evidence="5">
    <location>
        <begin position="498"/>
        <end position="508"/>
    </location>
</feature>
<feature type="disulfide bond" evidence="5">
    <location>
        <begin position="559"/>
        <end position="565"/>
    </location>
</feature>
<feature type="disulfide bond" evidence="5">
    <location>
        <begin position="611"/>
        <end position="659"/>
    </location>
</feature>
<feature type="disulfide bond" evidence="5">
    <location>
        <begin position="643"/>
        <end position="649"/>
    </location>
</feature>
<feature type="disulfide bond" evidence="5">
    <location>
        <begin position="671"/>
        <end position="681"/>
    </location>
</feature>
<feature type="disulfide bond" evidence="5">
    <location>
        <begin position="718"/>
        <end position="732"/>
    </location>
</feature>
<feature type="cross-link" description="Lysine tyrosylquinone (Lys-Tyr)" evidence="2">
    <location>
        <begin position="639"/>
        <end position="675"/>
    </location>
</feature>
<feature type="sequence conflict" description="In Ref. 1; AAK71933." evidence="6" ref="1">
    <original>T</original>
    <variation>A</variation>
    <location>
        <position position="39"/>
    </location>
</feature>
<feature type="sequence conflict" description="In Ref. 1; AAK71933." evidence="6" ref="1">
    <original>V</original>
    <variation>I</variation>
    <location>
        <position position="120"/>
    </location>
</feature>
<feature type="sequence conflict" description="In Ref. 1; AAK71933." evidence="6" ref="1">
    <original>L</original>
    <variation>F</variation>
    <location>
        <position position="253"/>
    </location>
</feature>
<feature type="sequence conflict" description="In Ref. 1; AAK71933." evidence="6" ref="1">
    <original>V</original>
    <variation>G</variation>
    <location>
        <position position="444"/>
    </location>
</feature>
<feature type="sequence conflict" description="In Ref. 1; AAK71933." evidence="6" ref="1">
    <original>Y</original>
    <variation>N</variation>
    <location>
        <position position="615"/>
    </location>
</feature>
<protein>
    <recommendedName>
        <fullName>Lysyl oxidase homolog 4</fullName>
        <ecNumber evidence="3">1.4.3.13</ecNumber>
    </recommendedName>
    <alternativeName>
        <fullName>Lysyl oxidase-like protein 4</fullName>
    </alternativeName>
    <alternativeName>
        <fullName>Lysyl oxidase-related protein C</fullName>
    </alternativeName>
</protein>